<dbReference type="EMBL" id="AL596173">
    <property type="protein sequence ID" value="CAC97982.1"/>
    <property type="molecule type" value="Genomic_DNA"/>
</dbReference>
<dbReference type="PIR" id="AF1776">
    <property type="entry name" value="AF1776"/>
</dbReference>
<dbReference type="RefSeq" id="WP_003720926.1">
    <property type="nucleotide sequence ID" value="NC_003212.1"/>
</dbReference>
<dbReference type="SMR" id="P66353"/>
<dbReference type="STRING" id="272626.gene:17567143"/>
<dbReference type="GeneID" id="93240488"/>
<dbReference type="KEGG" id="lin:rpsK"/>
<dbReference type="eggNOG" id="COG0100">
    <property type="taxonomic scope" value="Bacteria"/>
</dbReference>
<dbReference type="HOGENOM" id="CLU_072439_5_0_9"/>
<dbReference type="OrthoDB" id="9806415at2"/>
<dbReference type="Proteomes" id="UP000002513">
    <property type="component" value="Chromosome"/>
</dbReference>
<dbReference type="GO" id="GO:1990904">
    <property type="term" value="C:ribonucleoprotein complex"/>
    <property type="evidence" value="ECO:0007669"/>
    <property type="project" value="UniProtKB-KW"/>
</dbReference>
<dbReference type="GO" id="GO:0005840">
    <property type="term" value="C:ribosome"/>
    <property type="evidence" value="ECO:0007669"/>
    <property type="project" value="UniProtKB-KW"/>
</dbReference>
<dbReference type="GO" id="GO:0019843">
    <property type="term" value="F:rRNA binding"/>
    <property type="evidence" value="ECO:0007669"/>
    <property type="project" value="UniProtKB-UniRule"/>
</dbReference>
<dbReference type="GO" id="GO:0003735">
    <property type="term" value="F:structural constituent of ribosome"/>
    <property type="evidence" value="ECO:0007669"/>
    <property type="project" value="InterPro"/>
</dbReference>
<dbReference type="GO" id="GO:0006412">
    <property type="term" value="P:translation"/>
    <property type="evidence" value="ECO:0007669"/>
    <property type="project" value="UniProtKB-UniRule"/>
</dbReference>
<dbReference type="FunFam" id="3.30.420.80:FF:000001">
    <property type="entry name" value="30S ribosomal protein S11"/>
    <property type="match status" value="1"/>
</dbReference>
<dbReference type="Gene3D" id="3.30.420.80">
    <property type="entry name" value="Ribosomal protein S11"/>
    <property type="match status" value="1"/>
</dbReference>
<dbReference type="HAMAP" id="MF_01310">
    <property type="entry name" value="Ribosomal_uS11"/>
    <property type="match status" value="1"/>
</dbReference>
<dbReference type="InterPro" id="IPR001971">
    <property type="entry name" value="Ribosomal_uS11"/>
</dbReference>
<dbReference type="InterPro" id="IPR019981">
    <property type="entry name" value="Ribosomal_uS11_bac-type"/>
</dbReference>
<dbReference type="InterPro" id="IPR018102">
    <property type="entry name" value="Ribosomal_uS11_CS"/>
</dbReference>
<dbReference type="InterPro" id="IPR036967">
    <property type="entry name" value="Ribosomal_uS11_sf"/>
</dbReference>
<dbReference type="NCBIfam" id="NF003698">
    <property type="entry name" value="PRK05309.1"/>
    <property type="match status" value="1"/>
</dbReference>
<dbReference type="NCBIfam" id="TIGR03632">
    <property type="entry name" value="uS11_bact"/>
    <property type="match status" value="1"/>
</dbReference>
<dbReference type="PANTHER" id="PTHR11759">
    <property type="entry name" value="40S RIBOSOMAL PROTEIN S14/30S RIBOSOMAL PROTEIN S11"/>
    <property type="match status" value="1"/>
</dbReference>
<dbReference type="Pfam" id="PF00411">
    <property type="entry name" value="Ribosomal_S11"/>
    <property type="match status" value="1"/>
</dbReference>
<dbReference type="PIRSF" id="PIRSF002131">
    <property type="entry name" value="Ribosomal_S11"/>
    <property type="match status" value="1"/>
</dbReference>
<dbReference type="SUPFAM" id="SSF53137">
    <property type="entry name" value="Translational machinery components"/>
    <property type="match status" value="1"/>
</dbReference>
<dbReference type="PROSITE" id="PS00054">
    <property type="entry name" value="RIBOSOMAL_S11"/>
    <property type="match status" value="1"/>
</dbReference>
<comment type="function">
    <text evidence="1">Located on the platform of the 30S subunit, it bridges several disparate RNA helices of the 16S rRNA. Forms part of the Shine-Dalgarno cleft in the 70S ribosome.</text>
</comment>
<comment type="subunit">
    <text evidence="1">Part of the 30S ribosomal subunit. Interacts with proteins S7 and S18. Binds to IF-3.</text>
</comment>
<comment type="similarity">
    <text evidence="1">Belongs to the universal ribosomal protein uS11 family.</text>
</comment>
<evidence type="ECO:0000255" key="1">
    <source>
        <dbReference type="HAMAP-Rule" id="MF_01310"/>
    </source>
</evidence>
<evidence type="ECO:0000305" key="2"/>
<sequence>MARKTNTRKRRVKKNIESGIAHIRSTFNNTIVMITDTHGNALAWSSAGSLGFKGSRKSTPFAAQMAAESAAKSAQEHGLKTLEVTVKGPGSGREAAIRALQAAGLEVTAIKDVTPVPHNGCRPPKRRRV</sequence>
<proteinExistence type="inferred from homology"/>
<name>RS11_LISIN</name>
<reference key="1">
    <citation type="journal article" date="2001" name="Science">
        <title>Comparative genomics of Listeria species.</title>
        <authorList>
            <person name="Glaser P."/>
            <person name="Frangeul L."/>
            <person name="Buchrieser C."/>
            <person name="Rusniok C."/>
            <person name="Amend A."/>
            <person name="Baquero F."/>
            <person name="Berche P."/>
            <person name="Bloecker H."/>
            <person name="Brandt P."/>
            <person name="Chakraborty T."/>
            <person name="Charbit A."/>
            <person name="Chetouani F."/>
            <person name="Couve E."/>
            <person name="de Daruvar A."/>
            <person name="Dehoux P."/>
            <person name="Domann E."/>
            <person name="Dominguez-Bernal G."/>
            <person name="Duchaud E."/>
            <person name="Durant L."/>
            <person name="Dussurget O."/>
            <person name="Entian K.-D."/>
            <person name="Fsihi H."/>
            <person name="Garcia-del Portillo F."/>
            <person name="Garrido P."/>
            <person name="Gautier L."/>
            <person name="Goebel W."/>
            <person name="Gomez-Lopez N."/>
            <person name="Hain T."/>
            <person name="Hauf J."/>
            <person name="Jackson D."/>
            <person name="Jones L.-M."/>
            <person name="Kaerst U."/>
            <person name="Kreft J."/>
            <person name="Kuhn M."/>
            <person name="Kunst F."/>
            <person name="Kurapkat G."/>
            <person name="Madueno E."/>
            <person name="Maitournam A."/>
            <person name="Mata Vicente J."/>
            <person name="Ng E."/>
            <person name="Nedjari H."/>
            <person name="Nordsiek G."/>
            <person name="Novella S."/>
            <person name="de Pablos B."/>
            <person name="Perez-Diaz J.-C."/>
            <person name="Purcell R."/>
            <person name="Remmel B."/>
            <person name="Rose M."/>
            <person name="Schlueter T."/>
            <person name="Simoes N."/>
            <person name="Tierrez A."/>
            <person name="Vazquez-Boland J.-A."/>
            <person name="Voss H."/>
            <person name="Wehland J."/>
            <person name="Cossart P."/>
        </authorList>
    </citation>
    <scope>NUCLEOTIDE SEQUENCE [LARGE SCALE GENOMIC DNA]</scope>
    <source>
        <strain>ATCC BAA-680 / CLIP 11262</strain>
    </source>
</reference>
<protein>
    <recommendedName>
        <fullName evidence="1">Small ribosomal subunit protein uS11</fullName>
    </recommendedName>
    <alternativeName>
        <fullName evidence="2">30S ribosomal protein S11</fullName>
    </alternativeName>
</protein>
<feature type="chain" id="PRO_0000123171" description="Small ribosomal subunit protein uS11">
    <location>
        <begin position="1"/>
        <end position="129"/>
    </location>
</feature>
<organism>
    <name type="scientific">Listeria innocua serovar 6a (strain ATCC BAA-680 / CLIP 11262)</name>
    <dbReference type="NCBI Taxonomy" id="272626"/>
    <lineage>
        <taxon>Bacteria</taxon>
        <taxon>Bacillati</taxon>
        <taxon>Bacillota</taxon>
        <taxon>Bacilli</taxon>
        <taxon>Bacillales</taxon>
        <taxon>Listeriaceae</taxon>
        <taxon>Listeria</taxon>
    </lineage>
</organism>
<keyword id="KW-0687">Ribonucleoprotein</keyword>
<keyword id="KW-0689">Ribosomal protein</keyword>
<keyword id="KW-0694">RNA-binding</keyword>
<keyword id="KW-0699">rRNA-binding</keyword>
<accession>P66353</accession>
<accession>Q927N2</accession>
<gene>
    <name evidence="1" type="primary">rpsK</name>
    <name type="ordered locus">lin2756</name>
</gene>